<dbReference type="EC" id="3.5.4.25" evidence="1"/>
<dbReference type="EMBL" id="CP000238">
    <property type="protein sequence ID" value="ABF14093.1"/>
    <property type="molecule type" value="Genomic_DNA"/>
</dbReference>
<dbReference type="RefSeq" id="WP_011520482.1">
    <property type="nucleotide sequence ID" value="NC_007984.1"/>
</dbReference>
<dbReference type="SMR" id="Q1LTG5"/>
<dbReference type="STRING" id="374463.BCI_0300"/>
<dbReference type="KEGG" id="bci:BCI_0300"/>
<dbReference type="HOGENOM" id="CLU_020273_2_1_6"/>
<dbReference type="OrthoDB" id="9793111at2"/>
<dbReference type="UniPathway" id="UPA00275">
    <property type="reaction ID" value="UER00400"/>
</dbReference>
<dbReference type="Proteomes" id="UP000002427">
    <property type="component" value="Chromosome"/>
</dbReference>
<dbReference type="GO" id="GO:0005829">
    <property type="term" value="C:cytosol"/>
    <property type="evidence" value="ECO:0007669"/>
    <property type="project" value="TreeGrafter"/>
</dbReference>
<dbReference type="GO" id="GO:0005525">
    <property type="term" value="F:GTP binding"/>
    <property type="evidence" value="ECO:0007669"/>
    <property type="project" value="UniProtKB-KW"/>
</dbReference>
<dbReference type="GO" id="GO:0003935">
    <property type="term" value="F:GTP cyclohydrolase II activity"/>
    <property type="evidence" value="ECO:0007669"/>
    <property type="project" value="UniProtKB-UniRule"/>
</dbReference>
<dbReference type="GO" id="GO:0008270">
    <property type="term" value="F:zinc ion binding"/>
    <property type="evidence" value="ECO:0007669"/>
    <property type="project" value="UniProtKB-UniRule"/>
</dbReference>
<dbReference type="GO" id="GO:0009231">
    <property type="term" value="P:riboflavin biosynthetic process"/>
    <property type="evidence" value="ECO:0007669"/>
    <property type="project" value="UniProtKB-UniRule"/>
</dbReference>
<dbReference type="CDD" id="cd00641">
    <property type="entry name" value="GTP_cyclohydro2"/>
    <property type="match status" value="1"/>
</dbReference>
<dbReference type="FunFam" id="3.40.50.10990:FF:000002">
    <property type="entry name" value="GTP cyclohydrolase-2"/>
    <property type="match status" value="1"/>
</dbReference>
<dbReference type="Gene3D" id="3.40.50.10990">
    <property type="entry name" value="GTP cyclohydrolase II"/>
    <property type="match status" value="1"/>
</dbReference>
<dbReference type="HAMAP" id="MF_00179">
    <property type="entry name" value="RibA"/>
    <property type="match status" value="1"/>
</dbReference>
<dbReference type="InterPro" id="IPR032677">
    <property type="entry name" value="GTP_cyclohydro_II"/>
</dbReference>
<dbReference type="InterPro" id="IPR000926">
    <property type="entry name" value="RibA"/>
</dbReference>
<dbReference type="InterPro" id="IPR036144">
    <property type="entry name" value="RibA-like_sf"/>
</dbReference>
<dbReference type="NCBIfam" id="NF001591">
    <property type="entry name" value="PRK00393.1"/>
    <property type="match status" value="1"/>
</dbReference>
<dbReference type="NCBIfam" id="TIGR00505">
    <property type="entry name" value="ribA"/>
    <property type="match status" value="1"/>
</dbReference>
<dbReference type="PANTHER" id="PTHR21327:SF18">
    <property type="entry name" value="3,4-DIHYDROXY-2-BUTANONE 4-PHOSPHATE SYNTHASE"/>
    <property type="match status" value="1"/>
</dbReference>
<dbReference type="PANTHER" id="PTHR21327">
    <property type="entry name" value="GTP CYCLOHYDROLASE II-RELATED"/>
    <property type="match status" value="1"/>
</dbReference>
<dbReference type="Pfam" id="PF00925">
    <property type="entry name" value="GTP_cyclohydro2"/>
    <property type="match status" value="1"/>
</dbReference>
<dbReference type="SUPFAM" id="SSF142695">
    <property type="entry name" value="RibA-like"/>
    <property type="match status" value="1"/>
</dbReference>
<feature type="chain" id="PRO_1000040556" description="GTP cyclohydrolase-2">
    <location>
        <begin position="1"/>
        <end position="199"/>
    </location>
</feature>
<feature type="active site" description="Proton acceptor" evidence="1">
    <location>
        <position position="126"/>
    </location>
</feature>
<feature type="active site" description="Nucleophile" evidence="1">
    <location>
        <position position="128"/>
    </location>
</feature>
<feature type="binding site" evidence="1">
    <location>
        <begin position="49"/>
        <end position="53"/>
    </location>
    <ligand>
        <name>GTP</name>
        <dbReference type="ChEBI" id="CHEBI:37565"/>
    </ligand>
</feature>
<feature type="binding site" evidence="1">
    <location>
        <position position="54"/>
    </location>
    <ligand>
        <name>Zn(2+)</name>
        <dbReference type="ChEBI" id="CHEBI:29105"/>
        <note>catalytic</note>
    </ligand>
</feature>
<feature type="binding site" evidence="1">
    <location>
        <position position="65"/>
    </location>
    <ligand>
        <name>Zn(2+)</name>
        <dbReference type="ChEBI" id="CHEBI:29105"/>
        <note>catalytic</note>
    </ligand>
</feature>
<feature type="binding site" evidence="1">
    <location>
        <position position="67"/>
    </location>
    <ligand>
        <name>Zn(2+)</name>
        <dbReference type="ChEBI" id="CHEBI:29105"/>
        <note>catalytic</note>
    </ligand>
</feature>
<feature type="binding site" evidence="1">
    <location>
        <position position="70"/>
    </location>
    <ligand>
        <name>GTP</name>
        <dbReference type="ChEBI" id="CHEBI:37565"/>
    </ligand>
</feature>
<feature type="binding site" evidence="1">
    <location>
        <begin position="92"/>
        <end position="94"/>
    </location>
    <ligand>
        <name>GTP</name>
        <dbReference type="ChEBI" id="CHEBI:37565"/>
    </ligand>
</feature>
<feature type="binding site" evidence="1">
    <location>
        <position position="114"/>
    </location>
    <ligand>
        <name>GTP</name>
        <dbReference type="ChEBI" id="CHEBI:37565"/>
    </ligand>
</feature>
<feature type="binding site" evidence="1">
    <location>
        <position position="149"/>
    </location>
    <ligand>
        <name>GTP</name>
        <dbReference type="ChEBI" id="CHEBI:37565"/>
    </ligand>
</feature>
<feature type="binding site" evidence="1">
    <location>
        <position position="154"/>
    </location>
    <ligand>
        <name>GTP</name>
        <dbReference type="ChEBI" id="CHEBI:37565"/>
    </ligand>
</feature>
<proteinExistence type="inferred from homology"/>
<evidence type="ECO:0000255" key="1">
    <source>
        <dbReference type="HAMAP-Rule" id="MF_00179"/>
    </source>
</evidence>
<gene>
    <name evidence="1" type="primary">ribA</name>
    <name type="ordered locus">BCI_0300</name>
</gene>
<accession>Q1LTG5</accession>
<name>RIBA_BAUCH</name>
<organism>
    <name type="scientific">Baumannia cicadellinicola subsp. Homalodisca coagulata</name>
    <dbReference type="NCBI Taxonomy" id="374463"/>
    <lineage>
        <taxon>Bacteria</taxon>
        <taxon>Pseudomonadati</taxon>
        <taxon>Pseudomonadota</taxon>
        <taxon>Gammaproteobacteria</taxon>
        <taxon>Candidatus Palibaumannia</taxon>
    </lineage>
</organism>
<comment type="function">
    <text evidence="1">Catalyzes the conversion of GTP to 2,5-diamino-6-ribosylamino-4(3H)-pyrimidinone 5'-phosphate (DARP), formate and pyrophosphate.</text>
</comment>
<comment type="catalytic activity">
    <reaction evidence="1">
        <text>GTP + 4 H2O = 2,5-diamino-6-hydroxy-4-(5-phosphoribosylamino)-pyrimidine + formate + 2 phosphate + 3 H(+)</text>
        <dbReference type="Rhea" id="RHEA:23704"/>
        <dbReference type="ChEBI" id="CHEBI:15377"/>
        <dbReference type="ChEBI" id="CHEBI:15378"/>
        <dbReference type="ChEBI" id="CHEBI:15740"/>
        <dbReference type="ChEBI" id="CHEBI:37565"/>
        <dbReference type="ChEBI" id="CHEBI:43474"/>
        <dbReference type="ChEBI" id="CHEBI:58614"/>
        <dbReference type="EC" id="3.5.4.25"/>
    </reaction>
</comment>
<comment type="cofactor">
    <cofactor evidence="1">
        <name>Zn(2+)</name>
        <dbReference type="ChEBI" id="CHEBI:29105"/>
    </cofactor>
    <text evidence="1">Binds 1 zinc ion per subunit.</text>
</comment>
<comment type="pathway">
    <text evidence="1">Cofactor biosynthesis; riboflavin biosynthesis; 5-amino-6-(D-ribitylamino)uracil from GTP: step 1/4.</text>
</comment>
<comment type="similarity">
    <text evidence="1">Belongs to the GTP cyclohydrolase II family.</text>
</comment>
<protein>
    <recommendedName>
        <fullName evidence="1">GTP cyclohydrolase-2</fullName>
        <ecNumber evidence="1">3.5.4.25</ecNumber>
    </recommendedName>
    <alternativeName>
        <fullName evidence="1">GTP cyclohydrolase II</fullName>
    </alternativeName>
</protein>
<sequence length="199" mass="22247">MQLKRVAEAKLPTPWGDFLMIGFEEIATKHDHLALVYGDITSKEPVLARVHSECLTGDALFSLRCDCGFQLAAALSSIAEERRGLLLYHRQEGRNIGLLNKIRAYALQDQGSDTVKANHQLGFAADERDFTLCADMFKVLGVYSIRLLTNNPQKVDILTQAGINVAERIPLIVGRNPENARYLDTKAAKMGHLLHDRYK</sequence>
<reference key="1">
    <citation type="journal article" date="2006" name="PLoS Biol.">
        <title>Metabolic complementarity and genomics of the dual bacterial symbiosis of sharpshooters.</title>
        <authorList>
            <person name="Wu D."/>
            <person name="Daugherty S.C."/>
            <person name="Van Aken S.E."/>
            <person name="Pai G.H."/>
            <person name="Watkins K.L."/>
            <person name="Khouri H."/>
            <person name="Tallon L.J."/>
            <person name="Zaborsky J.M."/>
            <person name="Dunbar H.E."/>
            <person name="Tran P.L."/>
            <person name="Moran N.A."/>
            <person name="Eisen J.A."/>
        </authorList>
    </citation>
    <scope>NUCLEOTIDE SEQUENCE [LARGE SCALE GENOMIC DNA]</scope>
</reference>
<keyword id="KW-0342">GTP-binding</keyword>
<keyword id="KW-0378">Hydrolase</keyword>
<keyword id="KW-0479">Metal-binding</keyword>
<keyword id="KW-0547">Nucleotide-binding</keyword>
<keyword id="KW-1185">Reference proteome</keyword>
<keyword id="KW-0686">Riboflavin biosynthesis</keyword>
<keyword id="KW-0862">Zinc</keyword>